<comment type="function">
    <text evidence="3 7">Meiotic protein that localizes to the central element of the synaptonemal complex and is required for chromosome synapsis during meiotic recombination (PubMed:27796301, PubMed:33508233). Required for the appropriate processing of intermediate recombination nodules before crossover formation (PubMed:27796301).</text>
</comment>
<comment type="subunit">
    <text evidence="3 6">Interacts with SYCE1 (PubMed:27796301). Interacts with proteasome subunit PSMA8; to participate in meiosis progression during spermatogenesis (PubMed:31437213).</text>
</comment>
<comment type="subcellular location">
    <subcellularLocation>
        <location evidence="3 4 5">Chromosome</location>
    </subcellularLocation>
    <text evidence="3">Component of the central element of the synaptonemal complex (PubMed:27796301). In spermatocytes, detected from zygonema to pachynema and localizes along synapsed lateral elements (PubMed:27796301). Loading to the central element of the synaptonemal complex is dependent on the assembly of the tripartite synaptonemal complex structure that occurs upon synapsis between homologous chromosomes (PubMed:27796301).</text>
</comment>
<comment type="alternative products">
    <event type="alternative splicing"/>
    <isoform>
        <id>Q9CTN5-1</id>
        <name>1</name>
        <sequence type="displayed"/>
    </isoform>
    <isoform>
        <id>Q9CTN5-2</id>
        <name>2</name>
        <sequence type="described" ref="VSP_007121 VSP_007122"/>
    </isoform>
</comment>
<comment type="tissue specificity">
    <text evidence="2 3">Most abundantly expressed in testis (PubMed:27796301). Also expressed in retina and skeletal muscle (PubMed:15703187).</text>
</comment>
<comment type="disruption phenotype">
    <text evidence="3">Mice develop normally but males and females are sterile due to defects in chromosome synapsis at meiotic prophase I (PubMed:27796301). Spermatogenesis proceeds normally up to prophase I until a massive apoptosis of spermatocytes takes place at stage IV (PubMed:27796301). Ovaries of female mice at 4 months of age display a lack of oocytes (PubMed:27796301).</text>
</comment>
<gene>
    <name type="primary">Six6os1</name>
</gene>
<evidence type="ECO:0000256" key="1">
    <source>
        <dbReference type="SAM" id="MobiDB-lite"/>
    </source>
</evidence>
<evidence type="ECO:0000269" key="2">
    <source>
    </source>
</evidence>
<evidence type="ECO:0000269" key="3">
    <source>
    </source>
</evidence>
<evidence type="ECO:0000269" key="4">
    <source>
    </source>
</evidence>
<evidence type="ECO:0000269" key="5">
    <source>
    </source>
</evidence>
<evidence type="ECO:0000269" key="6">
    <source>
    </source>
</evidence>
<evidence type="ECO:0000269" key="7">
    <source>
    </source>
</evidence>
<evidence type="ECO:0000303" key="8">
    <source>
    </source>
</evidence>
<evidence type="ECO:0007744" key="9">
    <source>
    </source>
</evidence>
<name>S6OS1_MOUSE</name>
<dbReference type="EMBL" id="AK014811">
    <property type="protein sequence ID" value="BAB29563.1"/>
    <property type="molecule type" value="mRNA"/>
</dbReference>
<dbReference type="EMBL" id="AK015397">
    <property type="protein sequence ID" value="BAB29829.1"/>
    <property type="molecule type" value="mRNA"/>
</dbReference>
<dbReference type="EMBL" id="AK020932">
    <property type="protein sequence ID" value="BAB32260.1"/>
    <property type="molecule type" value="mRNA"/>
</dbReference>
<dbReference type="CCDS" id="CCDS25971.1">
    <molecule id="Q9CTN5-1"/>
</dbReference>
<dbReference type="RefSeq" id="NP_083720.1">
    <molecule id="Q9CTN5-1"/>
    <property type="nucleotide sequence ID" value="NM_029444.2"/>
</dbReference>
<dbReference type="SMR" id="Q9CTN5"/>
<dbReference type="BioGRID" id="217752">
    <property type="interactions" value="5"/>
</dbReference>
<dbReference type="FunCoup" id="Q9CTN5">
    <property type="interactions" value="62"/>
</dbReference>
<dbReference type="STRING" id="10090.ENSMUSP00000035376"/>
<dbReference type="iPTMnet" id="Q9CTN5"/>
<dbReference type="PhosphoSitePlus" id="Q9CTN5"/>
<dbReference type="PaxDb" id="10090-ENSMUSP00000035376"/>
<dbReference type="Antibodypedia" id="66081">
    <property type="antibodies" value="14 antibodies from 11 providers"/>
</dbReference>
<dbReference type="Ensembl" id="ENSMUST00000044000.12">
    <molecule id="Q9CTN5-1"/>
    <property type="protein sequence ID" value="ENSMUSP00000035376.6"/>
    <property type="gene ID" value="ENSMUSG00000021098.16"/>
</dbReference>
<dbReference type="Ensembl" id="ENSMUST00000131033.8">
    <molecule id="Q9CTN5-2"/>
    <property type="protein sequence ID" value="ENSMUSP00000119777.2"/>
    <property type="gene ID" value="ENSMUSG00000021098.16"/>
</dbReference>
<dbReference type="GeneID" id="75801"/>
<dbReference type="KEGG" id="mmu:75801"/>
<dbReference type="UCSC" id="uc007nvv.1">
    <molecule id="Q9CTN5-1"/>
    <property type="organism name" value="mouse"/>
</dbReference>
<dbReference type="AGR" id="MGI:1923051"/>
<dbReference type="MGI" id="MGI:1923051">
    <property type="gene designation" value="4930447C04Rik"/>
</dbReference>
<dbReference type="VEuPathDB" id="HostDB:ENSMUSG00000021098"/>
<dbReference type="eggNOG" id="ENOG502QQ3A">
    <property type="taxonomic scope" value="Eukaryota"/>
</dbReference>
<dbReference type="GeneTree" id="ENSGT00390000010439"/>
<dbReference type="HOGENOM" id="CLU_1348557_0_0_1"/>
<dbReference type="InParanoid" id="Q9CTN5"/>
<dbReference type="OrthoDB" id="8961345at2759"/>
<dbReference type="PhylomeDB" id="Q9CTN5"/>
<dbReference type="TreeFam" id="TF337593"/>
<dbReference type="BioGRID-ORCS" id="75801">
    <property type="hits" value="0 hits in 77 CRISPR screens"/>
</dbReference>
<dbReference type="ChiTaRS" id="4930447C04Rik">
    <property type="organism name" value="mouse"/>
</dbReference>
<dbReference type="PRO" id="PR:Q9CTN5"/>
<dbReference type="Proteomes" id="UP000000589">
    <property type="component" value="Chromosome 12"/>
</dbReference>
<dbReference type="RNAct" id="Q9CTN5">
    <property type="molecule type" value="protein"/>
</dbReference>
<dbReference type="Bgee" id="ENSMUSG00000021098">
    <property type="expression patterns" value="Expressed in retinal neural layer and 125 other cell types or tissues"/>
</dbReference>
<dbReference type="ExpressionAtlas" id="Q9CTN5">
    <property type="expression patterns" value="baseline and differential"/>
</dbReference>
<dbReference type="GO" id="GO:0000801">
    <property type="term" value="C:central element"/>
    <property type="evidence" value="ECO:0000314"/>
    <property type="project" value="UniProtKB"/>
</dbReference>
<dbReference type="GO" id="GO:0005694">
    <property type="term" value="C:chromosome"/>
    <property type="evidence" value="ECO:0000314"/>
    <property type="project" value="UniProtKB"/>
</dbReference>
<dbReference type="GO" id="GO:0007129">
    <property type="term" value="P:homologous chromosome pairing at meiosis"/>
    <property type="evidence" value="ECO:0000315"/>
    <property type="project" value="UniProtKB"/>
</dbReference>
<dbReference type="GO" id="GO:0051321">
    <property type="term" value="P:meiotic cell cycle"/>
    <property type="evidence" value="ECO:0000315"/>
    <property type="project" value="UniProtKB"/>
</dbReference>
<dbReference type="GO" id="GO:0010705">
    <property type="term" value="P:meiotic DNA double-strand break processing involved in reciprocal meiotic recombination"/>
    <property type="evidence" value="ECO:0000315"/>
    <property type="project" value="UniProtKB"/>
</dbReference>
<dbReference type="GO" id="GO:0048477">
    <property type="term" value="P:oogenesis"/>
    <property type="evidence" value="ECO:0000315"/>
    <property type="project" value="UniProtKB"/>
</dbReference>
<dbReference type="GO" id="GO:0051090">
    <property type="term" value="P:regulation of DNA-binding transcription factor activity"/>
    <property type="evidence" value="ECO:0000303"/>
    <property type="project" value="UniProtKB"/>
</dbReference>
<dbReference type="GO" id="GO:0007283">
    <property type="term" value="P:spermatogenesis"/>
    <property type="evidence" value="ECO:0000315"/>
    <property type="project" value="UniProtKB"/>
</dbReference>
<dbReference type="GO" id="GO:0007130">
    <property type="term" value="P:synaptonemal complex assembly"/>
    <property type="evidence" value="ECO:0000315"/>
    <property type="project" value="UniProtKB"/>
</dbReference>
<dbReference type="InterPro" id="IPR031380">
    <property type="entry name" value="SIX6OS1"/>
</dbReference>
<dbReference type="PANTHER" id="PTHR35449">
    <property type="entry name" value="PROTEIN SIX6OS1"/>
    <property type="match status" value="1"/>
</dbReference>
<dbReference type="PANTHER" id="PTHR35449:SF1">
    <property type="entry name" value="PROTEIN SIX6OS1"/>
    <property type="match status" value="1"/>
</dbReference>
<dbReference type="Pfam" id="PF15676">
    <property type="entry name" value="S6OS1"/>
    <property type="match status" value="1"/>
</dbReference>
<protein>
    <recommendedName>
        <fullName>Protein SIX6OS1</fullName>
    </recommendedName>
    <alternativeName>
        <fullName>Six6 opposite strand transcript 1 homolog</fullName>
    </alternativeName>
</protein>
<proteinExistence type="evidence at protein level"/>
<accession>Q9CTN5</accession>
<accession>Q9D5F5</accession>
<accession>Q9D5Y9</accession>
<keyword id="KW-0025">Alternative splicing</keyword>
<keyword id="KW-0158">Chromosome</keyword>
<keyword id="KW-0217">Developmental protein</keyword>
<keyword id="KW-0221">Differentiation</keyword>
<keyword id="KW-0233">DNA recombination</keyword>
<keyword id="KW-0469">Meiosis</keyword>
<keyword id="KW-0597">Phosphoprotein</keyword>
<keyword id="KW-1185">Reference proteome</keyword>
<keyword id="KW-0744">Spermatogenesis</keyword>
<feature type="chain" id="PRO_0000089889" description="Protein SIX6OS1">
    <location>
        <begin position="1"/>
        <end position="574"/>
    </location>
</feature>
<feature type="region of interest" description="Disordered" evidence="1">
    <location>
        <begin position="259"/>
        <end position="313"/>
    </location>
</feature>
<feature type="region of interest" description="Disordered" evidence="1">
    <location>
        <begin position="549"/>
        <end position="574"/>
    </location>
</feature>
<feature type="compositionally biased region" description="Low complexity" evidence="1">
    <location>
        <begin position="264"/>
        <end position="275"/>
    </location>
</feature>
<feature type="compositionally biased region" description="Low complexity" evidence="1">
    <location>
        <begin position="552"/>
        <end position="565"/>
    </location>
</feature>
<feature type="modified residue" description="Phosphothreonine" evidence="9">
    <location>
        <position position="427"/>
    </location>
</feature>
<feature type="modified residue" description="Phosphoserine" evidence="9">
    <location>
        <position position="430"/>
    </location>
</feature>
<feature type="splice variant" id="VSP_007121" description="In isoform 2." evidence="8">
    <original>VNLRYRTQDILKRANNFT</original>
    <variation>YPQQISLIIFLDKYNLRF</variation>
    <location>
        <begin position="186"/>
        <end position="203"/>
    </location>
</feature>
<feature type="splice variant" id="VSP_007122" description="In isoform 2." evidence="8">
    <location>
        <begin position="204"/>
        <end position="574"/>
    </location>
</feature>
<organism>
    <name type="scientific">Mus musculus</name>
    <name type="common">Mouse</name>
    <dbReference type="NCBI Taxonomy" id="10090"/>
    <lineage>
        <taxon>Eukaryota</taxon>
        <taxon>Metazoa</taxon>
        <taxon>Chordata</taxon>
        <taxon>Craniata</taxon>
        <taxon>Vertebrata</taxon>
        <taxon>Euteleostomi</taxon>
        <taxon>Mammalia</taxon>
        <taxon>Eutheria</taxon>
        <taxon>Euarchontoglires</taxon>
        <taxon>Glires</taxon>
        <taxon>Rodentia</taxon>
        <taxon>Myomorpha</taxon>
        <taxon>Muroidea</taxon>
        <taxon>Muridae</taxon>
        <taxon>Murinae</taxon>
        <taxon>Mus</taxon>
        <taxon>Mus</taxon>
    </lineage>
</organism>
<sequence>MNDNLFVSLDRLLLEFVFQYEQDISIKEDTIQRINKCLESIKENKANVSKLREAINKVDEDIAFHYKHSKEIKDSCSNWKPTCDVFHKHEDYIKDQLTAYQETNEKDKKMYHDYICQYEDVLKQYQLKYSETRFSCKYYEKKKEHEEIKNRVLACTEQLQLNETILMKFLVPAPFPSLTKWTLYVVNLRYRTQDILKRANNFTKRSFELEKEADDMEIEINSLNKMARLFESKTFSEALDEKNKNTEKRKEFEERIFEKDEQVSNRSSQNSQLLLPCESQKFVRNMNSSEARVTDKKEESSANQSKFVRSDVRQKENNPQIFNDSGMDSNSKSSHIPAVKSSQGFMQFRLNQPNYNQRIEKEHIDAECGDKETVRQVRESKCSTQALYIEHFGKSIENNSVEEERDENFPQTPETPSFLRTPEALKTPESMEKMQFPKSPFFEITKNATSEGHKQKDSPGFSFLMSYTSRSPGLNLFDSSVSDSEISSDQFNEHYSAVNLNPSSSQQGIGNLFGKSEGEDAFTFSFSSDSSHTFGAGKDDFSFPFSFEQDPSTMTSSSSKDFSSSQNKTQFMFF</sequence>
<reference key="1">
    <citation type="journal article" date="2005" name="Science">
        <title>The transcriptional landscape of the mammalian genome.</title>
        <authorList>
            <person name="Carninci P."/>
            <person name="Kasukawa T."/>
            <person name="Katayama S."/>
            <person name="Gough J."/>
            <person name="Frith M.C."/>
            <person name="Maeda N."/>
            <person name="Oyama R."/>
            <person name="Ravasi T."/>
            <person name="Lenhard B."/>
            <person name="Wells C."/>
            <person name="Kodzius R."/>
            <person name="Shimokawa K."/>
            <person name="Bajic V.B."/>
            <person name="Brenner S.E."/>
            <person name="Batalov S."/>
            <person name="Forrest A.R."/>
            <person name="Zavolan M."/>
            <person name="Davis M.J."/>
            <person name="Wilming L.G."/>
            <person name="Aidinis V."/>
            <person name="Allen J.E."/>
            <person name="Ambesi-Impiombato A."/>
            <person name="Apweiler R."/>
            <person name="Aturaliya R.N."/>
            <person name="Bailey T.L."/>
            <person name="Bansal M."/>
            <person name="Baxter L."/>
            <person name="Beisel K.W."/>
            <person name="Bersano T."/>
            <person name="Bono H."/>
            <person name="Chalk A.M."/>
            <person name="Chiu K.P."/>
            <person name="Choudhary V."/>
            <person name="Christoffels A."/>
            <person name="Clutterbuck D.R."/>
            <person name="Crowe M.L."/>
            <person name="Dalla E."/>
            <person name="Dalrymple B.P."/>
            <person name="de Bono B."/>
            <person name="Della Gatta G."/>
            <person name="di Bernardo D."/>
            <person name="Down T."/>
            <person name="Engstrom P."/>
            <person name="Fagiolini M."/>
            <person name="Faulkner G."/>
            <person name="Fletcher C.F."/>
            <person name="Fukushima T."/>
            <person name="Furuno M."/>
            <person name="Futaki S."/>
            <person name="Gariboldi M."/>
            <person name="Georgii-Hemming P."/>
            <person name="Gingeras T.R."/>
            <person name="Gojobori T."/>
            <person name="Green R.E."/>
            <person name="Gustincich S."/>
            <person name="Harbers M."/>
            <person name="Hayashi Y."/>
            <person name="Hensch T.K."/>
            <person name="Hirokawa N."/>
            <person name="Hill D."/>
            <person name="Huminiecki L."/>
            <person name="Iacono M."/>
            <person name="Ikeo K."/>
            <person name="Iwama A."/>
            <person name="Ishikawa T."/>
            <person name="Jakt M."/>
            <person name="Kanapin A."/>
            <person name="Katoh M."/>
            <person name="Kawasawa Y."/>
            <person name="Kelso J."/>
            <person name="Kitamura H."/>
            <person name="Kitano H."/>
            <person name="Kollias G."/>
            <person name="Krishnan S.P."/>
            <person name="Kruger A."/>
            <person name="Kummerfeld S.K."/>
            <person name="Kurochkin I.V."/>
            <person name="Lareau L.F."/>
            <person name="Lazarevic D."/>
            <person name="Lipovich L."/>
            <person name="Liu J."/>
            <person name="Liuni S."/>
            <person name="McWilliam S."/>
            <person name="Madan Babu M."/>
            <person name="Madera M."/>
            <person name="Marchionni L."/>
            <person name="Matsuda H."/>
            <person name="Matsuzawa S."/>
            <person name="Miki H."/>
            <person name="Mignone F."/>
            <person name="Miyake S."/>
            <person name="Morris K."/>
            <person name="Mottagui-Tabar S."/>
            <person name="Mulder N."/>
            <person name="Nakano N."/>
            <person name="Nakauchi H."/>
            <person name="Ng P."/>
            <person name="Nilsson R."/>
            <person name="Nishiguchi S."/>
            <person name="Nishikawa S."/>
            <person name="Nori F."/>
            <person name="Ohara O."/>
            <person name="Okazaki Y."/>
            <person name="Orlando V."/>
            <person name="Pang K.C."/>
            <person name="Pavan W.J."/>
            <person name="Pavesi G."/>
            <person name="Pesole G."/>
            <person name="Petrovsky N."/>
            <person name="Piazza S."/>
            <person name="Reed J."/>
            <person name="Reid J.F."/>
            <person name="Ring B.Z."/>
            <person name="Ringwald M."/>
            <person name="Rost B."/>
            <person name="Ruan Y."/>
            <person name="Salzberg S.L."/>
            <person name="Sandelin A."/>
            <person name="Schneider C."/>
            <person name="Schoenbach C."/>
            <person name="Sekiguchi K."/>
            <person name="Semple C.A."/>
            <person name="Seno S."/>
            <person name="Sessa L."/>
            <person name="Sheng Y."/>
            <person name="Shibata Y."/>
            <person name="Shimada H."/>
            <person name="Shimada K."/>
            <person name="Silva D."/>
            <person name="Sinclair B."/>
            <person name="Sperling S."/>
            <person name="Stupka E."/>
            <person name="Sugiura K."/>
            <person name="Sultana R."/>
            <person name="Takenaka Y."/>
            <person name="Taki K."/>
            <person name="Tammoja K."/>
            <person name="Tan S.L."/>
            <person name="Tang S."/>
            <person name="Taylor M.S."/>
            <person name="Tegner J."/>
            <person name="Teichmann S.A."/>
            <person name="Ueda H.R."/>
            <person name="van Nimwegen E."/>
            <person name="Verardo R."/>
            <person name="Wei C.L."/>
            <person name="Yagi K."/>
            <person name="Yamanishi H."/>
            <person name="Zabarovsky E."/>
            <person name="Zhu S."/>
            <person name="Zimmer A."/>
            <person name="Hide W."/>
            <person name="Bult C."/>
            <person name="Grimmond S.M."/>
            <person name="Teasdale R.D."/>
            <person name="Liu E.T."/>
            <person name="Brusic V."/>
            <person name="Quackenbush J."/>
            <person name="Wahlestedt C."/>
            <person name="Mattick J.S."/>
            <person name="Hume D.A."/>
            <person name="Kai C."/>
            <person name="Sasaki D."/>
            <person name="Tomaru Y."/>
            <person name="Fukuda S."/>
            <person name="Kanamori-Katayama M."/>
            <person name="Suzuki M."/>
            <person name="Aoki J."/>
            <person name="Arakawa T."/>
            <person name="Iida J."/>
            <person name="Imamura K."/>
            <person name="Itoh M."/>
            <person name="Kato T."/>
            <person name="Kawaji H."/>
            <person name="Kawagashira N."/>
            <person name="Kawashima T."/>
            <person name="Kojima M."/>
            <person name="Kondo S."/>
            <person name="Konno H."/>
            <person name="Nakano K."/>
            <person name="Ninomiya N."/>
            <person name="Nishio T."/>
            <person name="Okada M."/>
            <person name="Plessy C."/>
            <person name="Shibata K."/>
            <person name="Shiraki T."/>
            <person name="Suzuki S."/>
            <person name="Tagami M."/>
            <person name="Waki K."/>
            <person name="Watahiki A."/>
            <person name="Okamura-Oho Y."/>
            <person name="Suzuki H."/>
            <person name="Kawai J."/>
            <person name="Hayashizaki Y."/>
        </authorList>
    </citation>
    <scope>NUCLEOTIDE SEQUENCE [LARGE SCALE MRNA] (ISOFORMS 1 AND 2)</scope>
    <source>
        <strain>C57BL/6J</strain>
        <tissue>Retina</tissue>
        <tissue>Testis</tissue>
    </source>
</reference>
<reference key="2">
    <citation type="journal article" date="2005" name="Hum. Mol. Genet.">
        <title>Natural antisense transcripts associated with genes involved in eye development.</title>
        <authorList>
            <person name="Alfano G."/>
            <person name="Vitiello C."/>
            <person name="Caccioppoli C."/>
            <person name="Caramico T."/>
            <person name="Carola A."/>
            <person name="Szego M.J."/>
            <person name="McInnes R.R."/>
            <person name="Auricchio A."/>
            <person name="Banfi S."/>
        </authorList>
    </citation>
    <scope>IDENTIFICATION</scope>
    <scope>TISSUE SPECIFICITY</scope>
</reference>
<reference key="3">
    <citation type="journal article" date="2010" name="Cell">
        <title>A tissue-specific atlas of mouse protein phosphorylation and expression.</title>
        <authorList>
            <person name="Huttlin E.L."/>
            <person name="Jedrychowski M.P."/>
            <person name="Elias J.E."/>
            <person name="Goswami T."/>
            <person name="Rad R."/>
            <person name="Beausoleil S.A."/>
            <person name="Villen J."/>
            <person name="Haas W."/>
            <person name="Sowa M.E."/>
            <person name="Gygi S.P."/>
        </authorList>
    </citation>
    <scope>PHOSPHORYLATION [LARGE SCALE ANALYSIS] AT THR-427 AND SER-430</scope>
    <scope>IDENTIFICATION BY MASS SPECTROMETRY [LARGE SCALE ANALYSIS]</scope>
    <source>
        <tissue>Testis</tissue>
    </source>
</reference>
<reference key="4">
    <citation type="journal article" date="2016" name="Nat. Commun.">
        <title>C14ORF39/SIX6OS1 is a constituent of the synaptonemal complex and is essential for mouse fertility.</title>
        <authorList>
            <person name="Gomez-H L."/>
            <person name="Felipe-Medina N."/>
            <person name="Sanchez-Martin M."/>
            <person name="Davies O.R."/>
            <person name="Ramos I."/>
            <person name="Garcia-Tunon I."/>
            <person name="de Rooij D.G."/>
            <person name="Dereli I."/>
            <person name="Toth A."/>
            <person name="Barbero J.L."/>
            <person name="Benavente R."/>
            <person name="Llano E."/>
            <person name="Pendas A.M."/>
        </authorList>
    </citation>
    <scope>FUNCTION</scope>
    <scope>SUBCELLULAR LOCATION</scope>
    <scope>TISSUE SPECIFICITY</scope>
    <scope>DISRUPTION PHENOTYPE</scope>
</reference>
<reference key="5">
    <citation type="journal article" date="2019" name="PLoS Genet.">
        <title>The PSMA8 subunit of the spermatoproteasome is essential for proper meiotic exit and mouse fertility.</title>
        <authorList>
            <person name="Gomez-H L."/>
            <person name="Felipe-Medina N."/>
            <person name="Condezo Y.B."/>
            <person name="Garcia-Valiente R."/>
            <person name="Ramos I."/>
            <person name="Suja J.A."/>
            <person name="Barbero J.L."/>
            <person name="Roig I."/>
            <person name="Sanchez-Martin M."/>
            <person name="de Rooij D.G."/>
            <person name="Llano E."/>
            <person name="Pendas A.M."/>
        </authorList>
    </citation>
    <scope>INTERACTION WITH PSMA8</scope>
</reference>
<reference key="6">
    <citation type="journal article" date="2018" name="Commun. Biol.">
        <title>Evolutionarily-conserved MZIP2 is essential for crossover formation in mammalian meiosis.</title>
        <authorList>
            <person name="Zhang Q."/>
            <person name="Shao J."/>
            <person name="Fan H.Y."/>
            <person name="Yu C."/>
        </authorList>
    </citation>
    <scope>SUBCELLULAR LOCATION</scope>
</reference>
<reference key="7">
    <citation type="journal article" date="2019" name="Sci. Adv.">
        <title>SPO16 binds SHOC1 to promote homologous recombination and crossing-over in meiotic prophase I.</title>
        <authorList>
            <person name="Zhang Q."/>
            <person name="Ji S.Y."/>
            <person name="Busayavalasa K."/>
            <person name="Yu C."/>
        </authorList>
    </citation>
    <scope>SUBCELLULAR LOCATION</scope>
</reference>
<reference key="8">
    <citation type="journal article" date="2021" name="Am. J. Hum. Genet.">
        <title>Homozygous mutations in C14orf39/SIX6OS1 cause non-obstructive azoospermia and premature ovarian insufficiency in humans.</title>
        <authorList>
            <person name="Fan S."/>
            <person name="Jiao Y."/>
            <person name="Khan R."/>
            <person name="Jiang X."/>
            <person name="Javed A.R."/>
            <person name="Ali A."/>
            <person name="Zhang H."/>
            <person name="Zhou J."/>
            <person name="Naeem M."/>
            <person name="Murtaza G."/>
            <person name="Li Y."/>
            <person name="Yang G."/>
            <person name="Zaman Q."/>
            <person name="Zubair M."/>
            <person name="Guan H."/>
            <person name="Zhang X."/>
            <person name="Ma H."/>
            <person name="Jiang H."/>
            <person name="Ali H."/>
            <person name="Dil S."/>
            <person name="Shah W."/>
            <person name="Ahmad N."/>
            <person name="Zhang Y."/>
            <person name="Shi Q."/>
        </authorList>
    </citation>
    <scope>FUNCTION</scope>
</reference>